<protein>
    <recommendedName>
        <fullName evidence="1">Nickel import system ATP-binding protein NikD</fullName>
        <ecNumber evidence="1">7.2.2.11</ecNumber>
    </recommendedName>
</protein>
<gene>
    <name evidence="1" type="primary">nikD</name>
    <name type="synonym">oppD2</name>
    <name type="ordered locus">SAB1235c</name>
</gene>
<keyword id="KW-0067">ATP-binding</keyword>
<keyword id="KW-1003">Cell membrane</keyword>
<keyword id="KW-0406">Ion transport</keyword>
<keyword id="KW-0472">Membrane</keyword>
<keyword id="KW-0533">Nickel</keyword>
<keyword id="KW-0921">Nickel transport</keyword>
<keyword id="KW-0547">Nucleotide-binding</keyword>
<keyword id="KW-1278">Translocase</keyword>
<keyword id="KW-0813">Transport</keyword>
<sequence>MSLIDIQNLTIKNTSEKSLIKGIDLKIFSQQINALIGESGAGKSLIAKALLEYLPFDLTCTYYSYQFDGENVSRLSKYYGHTIGYISQNYAESFNDHTKLGKQLTAIYRKHYKSSKEEALSKIDKALSWVNLQSKDILNKYSFQLSGGQLERVYIASVLMLEPKLIIADEPVASLDALNGNQVMDLLQHIVLEHGQTLFIITHNLSHVLKYCQYINVLKEGQIIEQGNIDHFKYEHLHPYTEQLIKYRTQLKRDYYD</sequence>
<feature type="chain" id="PRO_0000276792" description="Nickel import system ATP-binding protein NikD">
    <location>
        <begin position="1"/>
        <end position="257"/>
    </location>
</feature>
<feature type="domain" description="ABC transporter" evidence="2">
    <location>
        <begin position="4"/>
        <end position="245"/>
    </location>
</feature>
<feature type="binding site" evidence="2">
    <location>
        <begin position="37"/>
        <end position="44"/>
    </location>
    <ligand>
        <name>ATP</name>
        <dbReference type="ChEBI" id="CHEBI:30616"/>
    </ligand>
</feature>
<evidence type="ECO:0000250" key="1">
    <source>
        <dbReference type="UniProtKB" id="Q2FYQ7"/>
    </source>
</evidence>
<evidence type="ECO:0000255" key="2">
    <source>
        <dbReference type="PROSITE-ProRule" id="PRU00434"/>
    </source>
</evidence>
<evidence type="ECO:0000305" key="3"/>
<reference key="1">
    <citation type="journal article" date="2007" name="PLoS ONE">
        <title>Molecular correlates of host specialization in Staphylococcus aureus.</title>
        <authorList>
            <person name="Herron-Olson L."/>
            <person name="Fitzgerald J.R."/>
            <person name="Musser J.M."/>
            <person name="Kapur V."/>
        </authorList>
    </citation>
    <scope>NUCLEOTIDE SEQUENCE [LARGE SCALE GENOMIC DNA]</scope>
    <source>
        <strain>bovine RF122 / ET3-1</strain>
    </source>
</reference>
<name>NIKD_STAAB</name>
<accession>Q2YXY9</accession>
<organism>
    <name type="scientific">Staphylococcus aureus (strain bovine RF122 / ET3-1)</name>
    <dbReference type="NCBI Taxonomy" id="273036"/>
    <lineage>
        <taxon>Bacteria</taxon>
        <taxon>Bacillati</taxon>
        <taxon>Bacillota</taxon>
        <taxon>Bacilli</taxon>
        <taxon>Bacillales</taxon>
        <taxon>Staphylococcaceae</taxon>
        <taxon>Staphylococcus</taxon>
    </lineage>
</organism>
<dbReference type="EC" id="7.2.2.11" evidence="1"/>
<dbReference type="EMBL" id="AJ938182">
    <property type="protein sequence ID" value="CAI80924.1"/>
    <property type="molecule type" value="Genomic_DNA"/>
</dbReference>
<dbReference type="RefSeq" id="WP_000052324.1">
    <property type="nucleotide sequence ID" value="NC_007622.1"/>
</dbReference>
<dbReference type="SMR" id="Q2YXY9"/>
<dbReference type="KEGG" id="sab:SAB1235c"/>
<dbReference type="HOGENOM" id="CLU_000604_1_23_9"/>
<dbReference type="GO" id="GO:0005886">
    <property type="term" value="C:plasma membrane"/>
    <property type="evidence" value="ECO:0007669"/>
    <property type="project" value="UniProtKB-SubCell"/>
</dbReference>
<dbReference type="GO" id="GO:0015413">
    <property type="term" value="F:ABC-type nickel transporter activity"/>
    <property type="evidence" value="ECO:0007669"/>
    <property type="project" value="UniProtKB-EC"/>
</dbReference>
<dbReference type="GO" id="GO:0005524">
    <property type="term" value="F:ATP binding"/>
    <property type="evidence" value="ECO:0007669"/>
    <property type="project" value="UniProtKB-KW"/>
</dbReference>
<dbReference type="GO" id="GO:0016887">
    <property type="term" value="F:ATP hydrolysis activity"/>
    <property type="evidence" value="ECO:0007669"/>
    <property type="project" value="InterPro"/>
</dbReference>
<dbReference type="FunFam" id="3.40.50.300:FF:001826">
    <property type="entry name" value="Nickel import system ATP-binding protein NikD"/>
    <property type="match status" value="1"/>
</dbReference>
<dbReference type="Gene3D" id="3.40.50.300">
    <property type="entry name" value="P-loop containing nucleotide triphosphate hydrolases"/>
    <property type="match status" value="1"/>
</dbReference>
<dbReference type="InterPro" id="IPR003593">
    <property type="entry name" value="AAA+_ATPase"/>
</dbReference>
<dbReference type="InterPro" id="IPR050388">
    <property type="entry name" value="ABC_Ni/Peptide_Import"/>
</dbReference>
<dbReference type="InterPro" id="IPR003439">
    <property type="entry name" value="ABC_transporter-like_ATP-bd"/>
</dbReference>
<dbReference type="InterPro" id="IPR027417">
    <property type="entry name" value="P-loop_NTPase"/>
</dbReference>
<dbReference type="PANTHER" id="PTHR43297:SF13">
    <property type="entry name" value="NICKEL ABC TRANSPORTER, ATP-BINDING PROTEIN"/>
    <property type="match status" value="1"/>
</dbReference>
<dbReference type="PANTHER" id="PTHR43297">
    <property type="entry name" value="OLIGOPEPTIDE TRANSPORT ATP-BINDING PROTEIN APPD"/>
    <property type="match status" value="1"/>
</dbReference>
<dbReference type="Pfam" id="PF00005">
    <property type="entry name" value="ABC_tran"/>
    <property type="match status" value="1"/>
</dbReference>
<dbReference type="SMART" id="SM00382">
    <property type="entry name" value="AAA"/>
    <property type="match status" value="1"/>
</dbReference>
<dbReference type="SUPFAM" id="SSF52540">
    <property type="entry name" value="P-loop containing nucleoside triphosphate hydrolases"/>
    <property type="match status" value="1"/>
</dbReference>
<dbReference type="PROSITE" id="PS50893">
    <property type="entry name" value="ABC_TRANSPORTER_2"/>
    <property type="match status" value="1"/>
</dbReference>
<comment type="function">
    <text evidence="1">Part of the ABC transporter complex NikABCDE (Opp2) involved in nickel import. Probably responsible for energy coupling to the transport system.</text>
</comment>
<comment type="catalytic activity">
    <reaction evidence="1">
        <text>Ni(2+)(out) + ATP + H2O = Ni(2+)(in) + ADP + phosphate + H(+)</text>
        <dbReference type="Rhea" id="RHEA:15557"/>
        <dbReference type="ChEBI" id="CHEBI:15377"/>
        <dbReference type="ChEBI" id="CHEBI:15378"/>
        <dbReference type="ChEBI" id="CHEBI:30616"/>
        <dbReference type="ChEBI" id="CHEBI:43474"/>
        <dbReference type="ChEBI" id="CHEBI:49786"/>
        <dbReference type="ChEBI" id="CHEBI:456216"/>
        <dbReference type="EC" id="7.2.2.11"/>
    </reaction>
    <physiologicalReaction direction="left-to-right" evidence="1">
        <dbReference type="Rhea" id="RHEA:15558"/>
    </physiologicalReaction>
</comment>
<comment type="subunit">
    <text evidence="1">The complex is composed of two ATP-binding proteins (NikD and NikE), two transmembrane proteins (NikB and NikC) and a solute-binding protein (NikA).</text>
</comment>
<comment type="subcellular location">
    <subcellularLocation>
        <location evidence="3">Cell membrane</location>
        <topology evidence="3">Peripheral membrane protein</topology>
    </subcellularLocation>
</comment>
<comment type="similarity">
    <text evidence="3">Belongs to the ABC transporter superfamily.</text>
</comment>
<proteinExistence type="inferred from homology"/>